<protein>
    <recommendedName>
        <fullName>Guanine nucleotide-binding protein subunit alpha</fullName>
    </recommendedName>
</protein>
<organism>
    <name type="scientific">Pyricularia oryzae (strain 70-15 / ATCC MYA-4617 / FGSC 8958)</name>
    <name type="common">Rice blast fungus</name>
    <name type="synonym">Magnaporthe oryzae</name>
    <dbReference type="NCBI Taxonomy" id="242507"/>
    <lineage>
        <taxon>Eukaryota</taxon>
        <taxon>Fungi</taxon>
        <taxon>Dikarya</taxon>
        <taxon>Ascomycota</taxon>
        <taxon>Pezizomycotina</taxon>
        <taxon>Sordariomycetes</taxon>
        <taxon>Sordariomycetidae</taxon>
        <taxon>Magnaporthales</taxon>
        <taxon>Pyriculariaceae</taxon>
        <taxon>Pyricularia</taxon>
    </lineage>
</organism>
<gene>
    <name type="primary">MAGB</name>
    <name type="ORF">MGG_00365</name>
</gene>
<proteinExistence type="inferred from homology"/>
<accession>O13315</accession>
<accession>A4RFF2</accession>
<accession>G4NCN7</accession>
<evidence type="ECO:0000250" key="1"/>
<evidence type="ECO:0000250" key="2">
    <source>
        <dbReference type="UniProtKB" id="P08539"/>
    </source>
</evidence>
<evidence type="ECO:0000250" key="3">
    <source>
        <dbReference type="UniProtKB" id="P18064"/>
    </source>
</evidence>
<evidence type="ECO:0000255" key="4">
    <source>
        <dbReference type="PROSITE-ProRule" id="PRU01230"/>
    </source>
</evidence>
<evidence type="ECO:0000256" key="5">
    <source>
        <dbReference type="SAM" id="MobiDB-lite"/>
    </source>
</evidence>
<evidence type="ECO:0000269" key="6">
    <source>
    </source>
</evidence>
<evidence type="ECO:0000305" key="7"/>
<name>GPA1_PYRO7</name>
<comment type="function">
    <text evidence="6">Guanine nucleotide-binding proteins (G proteins) are involved as modulators or transducers in various transmembrane signaling systems. Plays a role in pathogenicity, specifically in appressorium formation in rice blast disease. Also involved in mating.</text>
</comment>
<comment type="cofactor">
    <cofactor evidence="3">
        <name>Mg(2+)</name>
        <dbReference type="ChEBI" id="CHEBI:18420"/>
    </cofactor>
</comment>
<comment type="subunit">
    <text>G proteins are composed of 3 units; alpha, beta and gamma. The alpha chain contains the guanine nucleotide binding site.</text>
</comment>
<comment type="similarity">
    <text evidence="7">Belongs to the G-alpha family. G(q) subfamily.</text>
</comment>
<dbReference type="EMBL" id="AF011341">
    <property type="protein sequence ID" value="AAB65426.1"/>
    <property type="molecule type" value="Genomic_DNA"/>
</dbReference>
<dbReference type="EMBL" id="CM001235">
    <property type="protein sequence ID" value="EHA49131.1"/>
    <property type="molecule type" value="Genomic_DNA"/>
</dbReference>
<dbReference type="RefSeq" id="XP_003718715.1">
    <property type="nucleotide sequence ID" value="XM_003718667.1"/>
</dbReference>
<dbReference type="SMR" id="O13315"/>
<dbReference type="FunCoup" id="O13315">
    <property type="interactions" value="477"/>
</dbReference>
<dbReference type="STRING" id="242507.O13315"/>
<dbReference type="EnsemblFungi" id="MGG_00365T0">
    <property type="protein sequence ID" value="MGG_00365T0"/>
    <property type="gene ID" value="MGG_00365"/>
</dbReference>
<dbReference type="GeneID" id="2674115"/>
<dbReference type="KEGG" id="mgr:MGG_00365"/>
<dbReference type="VEuPathDB" id="FungiDB:MGG_00365"/>
<dbReference type="eggNOG" id="KOG0082">
    <property type="taxonomic scope" value="Eukaryota"/>
</dbReference>
<dbReference type="HOGENOM" id="CLU_014184_6_0_1"/>
<dbReference type="InParanoid" id="O13315"/>
<dbReference type="OMA" id="QVIWADA"/>
<dbReference type="OrthoDB" id="5817230at2759"/>
<dbReference type="PHI-base" id="PHI:123423"/>
<dbReference type="PHI-base" id="PHI:83"/>
<dbReference type="Proteomes" id="UP000009058">
    <property type="component" value="Chromosome 5"/>
</dbReference>
<dbReference type="GO" id="GO:0005737">
    <property type="term" value="C:cytoplasm"/>
    <property type="evidence" value="ECO:0007669"/>
    <property type="project" value="TreeGrafter"/>
</dbReference>
<dbReference type="GO" id="GO:0005834">
    <property type="term" value="C:heterotrimeric G-protein complex"/>
    <property type="evidence" value="ECO:0007669"/>
    <property type="project" value="InterPro"/>
</dbReference>
<dbReference type="GO" id="GO:0001664">
    <property type="term" value="F:G protein-coupled receptor binding"/>
    <property type="evidence" value="ECO:0007669"/>
    <property type="project" value="InterPro"/>
</dbReference>
<dbReference type="GO" id="GO:0031683">
    <property type="term" value="F:G-protein beta/gamma-subunit complex binding"/>
    <property type="evidence" value="ECO:0007669"/>
    <property type="project" value="InterPro"/>
</dbReference>
<dbReference type="GO" id="GO:0005525">
    <property type="term" value="F:GTP binding"/>
    <property type="evidence" value="ECO:0007669"/>
    <property type="project" value="UniProtKB-KW"/>
</dbReference>
<dbReference type="GO" id="GO:0003924">
    <property type="term" value="F:GTPase activity"/>
    <property type="evidence" value="ECO:0007669"/>
    <property type="project" value="InterPro"/>
</dbReference>
<dbReference type="GO" id="GO:0046872">
    <property type="term" value="F:metal ion binding"/>
    <property type="evidence" value="ECO:0007669"/>
    <property type="project" value="UniProtKB-KW"/>
</dbReference>
<dbReference type="GO" id="GO:0007186">
    <property type="term" value="P:G protein-coupled receptor signaling pathway"/>
    <property type="evidence" value="ECO:0007669"/>
    <property type="project" value="InterPro"/>
</dbReference>
<dbReference type="GO" id="GO:0000750">
    <property type="term" value="P:pheromone-dependent signal transduction involved in conjugation with cellular fusion"/>
    <property type="evidence" value="ECO:0007669"/>
    <property type="project" value="TreeGrafter"/>
</dbReference>
<dbReference type="CDD" id="cd00066">
    <property type="entry name" value="G-alpha"/>
    <property type="match status" value="1"/>
</dbReference>
<dbReference type="FunFam" id="1.10.400.10:FF:000001">
    <property type="entry name" value="Guanine nucleotide-binding protein G(I) subunit alpha"/>
    <property type="match status" value="1"/>
</dbReference>
<dbReference type="FunFam" id="3.40.50.300:FF:000051">
    <property type="entry name" value="Guanine nucleotide-binding protein subunit alpha"/>
    <property type="match status" value="1"/>
</dbReference>
<dbReference type="FunFam" id="3.40.50.300:FF:000692">
    <property type="entry name" value="Guanine nucleotide-binding protein subunit alpha"/>
    <property type="match status" value="1"/>
</dbReference>
<dbReference type="Gene3D" id="1.10.400.10">
    <property type="entry name" value="GI Alpha 1, domain 2-like"/>
    <property type="match status" value="1"/>
</dbReference>
<dbReference type="Gene3D" id="3.40.50.300">
    <property type="entry name" value="P-loop containing nucleotide triphosphate hydrolases"/>
    <property type="match status" value="1"/>
</dbReference>
<dbReference type="InterPro" id="IPR002975">
    <property type="entry name" value="Fungi_Gprotein_alpha"/>
</dbReference>
<dbReference type="InterPro" id="IPR001019">
    <property type="entry name" value="Gprotein_alpha_su"/>
</dbReference>
<dbReference type="InterPro" id="IPR011025">
    <property type="entry name" value="GproteinA_insert"/>
</dbReference>
<dbReference type="InterPro" id="IPR027417">
    <property type="entry name" value="P-loop_NTPase"/>
</dbReference>
<dbReference type="PANTHER" id="PTHR10218">
    <property type="entry name" value="GTP-BINDING PROTEIN ALPHA SUBUNIT"/>
    <property type="match status" value="1"/>
</dbReference>
<dbReference type="PANTHER" id="PTHR10218:SF302">
    <property type="entry name" value="GUANINE NUCLEOTIDE-BINDING PROTEIN ALPHA-5 SUBUNIT"/>
    <property type="match status" value="1"/>
</dbReference>
<dbReference type="Pfam" id="PF00503">
    <property type="entry name" value="G-alpha"/>
    <property type="match status" value="1"/>
</dbReference>
<dbReference type="PRINTS" id="PR00318">
    <property type="entry name" value="GPROTEINA"/>
</dbReference>
<dbReference type="PRINTS" id="PR01241">
    <property type="entry name" value="GPROTEINAFNG"/>
</dbReference>
<dbReference type="SMART" id="SM00275">
    <property type="entry name" value="G_alpha"/>
    <property type="match status" value="1"/>
</dbReference>
<dbReference type="SUPFAM" id="SSF52540">
    <property type="entry name" value="P-loop containing nucleoside triphosphate hydrolases"/>
    <property type="match status" value="1"/>
</dbReference>
<dbReference type="SUPFAM" id="SSF47895">
    <property type="entry name" value="Transducin (alpha subunit), insertion domain"/>
    <property type="match status" value="1"/>
</dbReference>
<dbReference type="PROSITE" id="PS51882">
    <property type="entry name" value="G_ALPHA"/>
    <property type="match status" value="1"/>
</dbReference>
<reference key="1">
    <citation type="journal article" date="1997" name="Mol. Plant Microbe Interact.">
        <title>G protein alpha subunit genes control growth, development, and pathogenicity of Magnaporthe grisea.</title>
        <authorList>
            <person name="Liu S."/>
            <person name="Dean R.A."/>
        </authorList>
    </citation>
    <scope>NUCLEOTIDE SEQUENCE [GENOMIC DNA]</scope>
    <scope>FUNCTION</scope>
    <source>
        <strain>70-15 / ATCC MYA-4617 / FGSC 8958</strain>
    </source>
</reference>
<reference key="2">
    <citation type="journal article" date="2005" name="Nature">
        <title>The genome sequence of the rice blast fungus Magnaporthe grisea.</title>
        <authorList>
            <person name="Dean R.A."/>
            <person name="Talbot N.J."/>
            <person name="Ebbole D.J."/>
            <person name="Farman M.L."/>
            <person name="Mitchell T.K."/>
            <person name="Orbach M.J."/>
            <person name="Thon M.R."/>
            <person name="Kulkarni R."/>
            <person name="Xu J.-R."/>
            <person name="Pan H."/>
            <person name="Read N.D."/>
            <person name="Lee Y.-H."/>
            <person name="Carbone I."/>
            <person name="Brown D."/>
            <person name="Oh Y.Y."/>
            <person name="Donofrio N."/>
            <person name="Jeong J.S."/>
            <person name="Soanes D.M."/>
            <person name="Djonovic S."/>
            <person name="Kolomiets E."/>
            <person name="Rehmeyer C."/>
            <person name="Li W."/>
            <person name="Harding M."/>
            <person name="Kim S."/>
            <person name="Lebrun M.-H."/>
            <person name="Bohnert H."/>
            <person name="Coughlan S."/>
            <person name="Butler J."/>
            <person name="Calvo S.E."/>
            <person name="Ma L.-J."/>
            <person name="Nicol R."/>
            <person name="Purcell S."/>
            <person name="Nusbaum C."/>
            <person name="Galagan J.E."/>
            <person name="Birren B.W."/>
        </authorList>
    </citation>
    <scope>NUCLEOTIDE SEQUENCE [LARGE SCALE GENOMIC DNA]</scope>
    <source>
        <strain>70-15 / ATCC MYA-4617 / FGSC 8958</strain>
    </source>
</reference>
<sequence length="353" mass="41072">MGCGMSTEEKEGKARNEEIENQLKRDRLQQRNEIKMLLLGAGESGKSTILKQMKLIHEGGYSRDERESFKEIIFSNTVQSMRVILEAMESLELPLEDQRMEYHVQTIFMQPAQIEGDVLPPEVGNAIEALWKDRGVQECFKRSREYQLNDSARYYFDNIARIAAPDYMPNDQDVLRSRVKTTGITETTFIIGDLTYRMFDVGGQRSERKKWIHCFENVTTILFLVAISEYDQLLFEDETVNRMQEALTLFDSICNSRWFIKTSIILFLNKIDRFKEKLPISPMKNYFPDYEGGDDYAAACDYILNRFVSLNQHETKQIYTHFTCATDTTQIRFVMAAVNDIIIQENLRLCGLI</sequence>
<keyword id="KW-0342">GTP-binding</keyword>
<keyword id="KW-0378">Hydrolase</keyword>
<keyword id="KW-0449">Lipoprotein</keyword>
<keyword id="KW-0460">Magnesium</keyword>
<keyword id="KW-0479">Metal-binding</keyword>
<keyword id="KW-0519">Myristate</keyword>
<keyword id="KW-0547">Nucleotide-binding</keyword>
<keyword id="KW-0564">Palmitate</keyword>
<keyword id="KW-1185">Reference proteome</keyword>
<keyword id="KW-0807">Transducer</keyword>
<feature type="initiator methionine" description="Removed" evidence="1">
    <location>
        <position position="1"/>
    </location>
</feature>
<feature type="chain" id="PRO_0000203604" description="Guanine nucleotide-binding protein subunit alpha">
    <location>
        <begin position="2"/>
        <end position="353"/>
    </location>
</feature>
<feature type="domain" description="G-alpha" evidence="4">
    <location>
        <begin position="32"/>
        <end position="353"/>
    </location>
</feature>
<feature type="region of interest" description="Disordered" evidence="5">
    <location>
        <begin position="1"/>
        <end position="21"/>
    </location>
</feature>
<feature type="region of interest" description="G1 motif" evidence="4">
    <location>
        <begin position="35"/>
        <end position="48"/>
    </location>
</feature>
<feature type="region of interest" description="G2 motif" evidence="4">
    <location>
        <begin position="173"/>
        <end position="181"/>
    </location>
</feature>
<feature type="region of interest" description="G3 motif" evidence="4">
    <location>
        <begin position="196"/>
        <end position="205"/>
    </location>
</feature>
<feature type="region of interest" description="G4 motif" evidence="4">
    <location>
        <begin position="265"/>
        <end position="272"/>
    </location>
</feature>
<feature type="region of interest" description="G5 motif" evidence="4">
    <location>
        <begin position="323"/>
        <end position="328"/>
    </location>
</feature>
<feature type="compositionally biased region" description="Basic and acidic residues" evidence="5">
    <location>
        <begin position="7"/>
        <end position="21"/>
    </location>
</feature>
<feature type="binding site" evidence="3">
    <location>
        <position position="43"/>
    </location>
    <ligand>
        <name>GTP</name>
        <dbReference type="ChEBI" id="CHEBI:37565"/>
    </ligand>
</feature>
<feature type="binding site" evidence="3">
    <location>
        <position position="44"/>
    </location>
    <ligand>
        <name>GTP</name>
        <dbReference type="ChEBI" id="CHEBI:37565"/>
    </ligand>
</feature>
<feature type="binding site" evidence="3">
    <location>
        <position position="45"/>
    </location>
    <ligand>
        <name>GTP</name>
        <dbReference type="ChEBI" id="CHEBI:37565"/>
    </ligand>
</feature>
<feature type="binding site" evidence="3">
    <location>
        <position position="46"/>
    </location>
    <ligand>
        <name>GTP</name>
        <dbReference type="ChEBI" id="CHEBI:37565"/>
    </ligand>
</feature>
<feature type="binding site" evidence="3">
    <location>
        <position position="47"/>
    </location>
    <ligand>
        <name>GTP</name>
        <dbReference type="ChEBI" id="CHEBI:37565"/>
    </ligand>
</feature>
<feature type="binding site" evidence="3">
    <location>
        <position position="47"/>
    </location>
    <ligand>
        <name>Mg(2+)</name>
        <dbReference type="ChEBI" id="CHEBI:18420"/>
    </ligand>
</feature>
<feature type="binding site" evidence="3">
    <location>
        <position position="48"/>
    </location>
    <ligand>
        <name>GTP</name>
        <dbReference type="ChEBI" id="CHEBI:37565"/>
    </ligand>
</feature>
<feature type="binding site" evidence="3">
    <location>
        <position position="150"/>
    </location>
    <ligand>
        <name>GTP</name>
        <dbReference type="ChEBI" id="CHEBI:37565"/>
    </ligand>
</feature>
<feature type="binding site" evidence="3">
    <location>
        <position position="175"/>
    </location>
    <ligand>
        <name>GTP</name>
        <dbReference type="ChEBI" id="CHEBI:37565"/>
    </ligand>
</feature>
<feature type="binding site" evidence="3">
    <location>
        <position position="181"/>
    </location>
    <ligand>
        <name>GTP</name>
        <dbReference type="ChEBI" id="CHEBI:37565"/>
    </ligand>
</feature>
<feature type="binding site" evidence="3">
    <location>
        <position position="181"/>
    </location>
    <ligand>
        <name>Mg(2+)</name>
        <dbReference type="ChEBI" id="CHEBI:18420"/>
    </ligand>
</feature>
<feature type="binding site" evidence="3">
    <location>
        <position position="203"/>
    </location>
    <ligand>
        <name>GTP</name>
        <dbReference type="ChEBI" id="CHEBI:37565"/>
    </ligand>
</feature>
<feature type="binding site" evidence="3">
    <location>
        <position position="269"/>
    </location>
    <ligand>
        <name>GTP</name>
        <dbReference type="ChEBI" id="CHEBI:37565"/>
    </ligand>
</feature>
<feature type="binding site" evidence="3">
    <location>
        <position position="270"/>
    </location>
    <ligand>
        <name>GTP</name>
        <dbReference type="ChEBI" id="CHEBI:37565"/>
    </ligand>
</feature>
<feature type="binding site" evidence="3">
    <location>
        <position position="272"/>
    </location>
    <ligand>
        <name>GTP</name>
        <dbReference type="ChEBI" id="CHEBI:37565"/>
    </ligand>
</feature>
<feature type="binding site" evidence="3">
    <location>
        <position position="325"/>
    </location>
    <ligand>
        <name>GTP</name>
        <dbReference type="ChEBI" id="CHEBI:37565"/>
    </ligand>
</feature>
<feature type="lipid moiety-binding region" description="N-myristoyl glycine" evidence="2">
    <location>
        <position position="2"/>
    </location>
</feature>
<feature type="lipid moiety-binding region" description="S-palmitoyl cysteine" evidence="2">
    <location>
        <position position="3"/>
    </location>
</feature>
<feature type="sequence conflict" description="In Ref. 1; AAB65426." evidence="7" ref="1">
    <original>I</original>
    <variation>T</variation>
    <location>
        <position position="265"/>
    </location>
</feature>